<sequence>MNPSPLSIHSALSSDALRIDAAAEVDRIAQAMRDQVRNKMRRRGLVIGLSGGVDSSVCAALAAYALGAQNVFAIFMPENDSDPESLSLGQEVAKAFSLEGAIEDIGSALAAMGCYERRDDFIRQVEPAYGSGWSCKVVISSPLAGEGYALSTLVLQAPDGSQTRHRMPASVYLGIVAATNMKQRTRKQMEYYHADRLNYAVLGTPNRLEYDQGFFVKNGDGAADLKPIAHLYKSQVYQIAEYLGVPEEVRRRPPTTDTWSLTQTQEEFYFALPYDRMDLCLHALNEGLGVEETAKATQLTTDQVERVWLDIHSKRKATRPLHLAPLLVQPVF</sequence>
<evidence type="ECO:0000255" key="1">
    <source>
        <dbReference type="HAMAP-Rule" id="MF_00193"/>
    </source>
</evidence>
<reference key="1">
    <citation type="journal article" date="2009" name="J. Bacteriol.">
        <title>Genome sequences of three Agrobacterium biovars help elucidate the evolution of multichromosome genomes in bacteria.</title>
        <authorList>
            <person name="Slater S.C."/>
            <person name="Goldman B.S."/>
            <person name="Goodner B."/>
            <person name="Setubal J.C."/>
            <person name="Farrand S.K."/>
            <person name="Nester E.W."/>
            <person name="Burr T.J."/>
            <person name="Banta L."/>
            <person name="Dickerman A.W."/>
            <person name="Paulsen I."/>
            <person name="Otten L."/>
            <person name="Suen G."/>
            <person name="Welch R."/>
            <person name="Almeida N.F."/>
            <person name="Arnold F."/>
            <person name="Burton O.T."/>
            <person name="Du Z."/>
            <person name="Ewing A."/>
            <person name="Godsy E."/>
            <person name="Heisel S."/>
            <person name="Houmiel K.L."/>
            <person name="Jhaveri J."/>
            <person name="Lu J."/>
            <person name="Miller N.M."/>
            <person name="Norton S."/>
            <person name="Chen Q."/>
            <person name="Phoolcharoen W."/>
            <person name="Ohlin V."/>
            <person name="Ondrusek D."/>
            <person name="Pride N."/>
            <person name="Stricklin S.L."/>
            <person name="Sun J."/>
            <person name="Wheeler C."/>
            <person name="Wilson L."/>
            <person name="Zhu H."/>
            <person name="Wood D.W."/>
        </authorList>
    </citation>
    <scope>NUCLEOTIDE SEQUENCE [LARGE SCALE GENOMIC DNA]</scope>
    <source>
        <strain>K84 / ATCC BAA-868</strain>
    </source>
</reference>
<gene>
    <name evidence="1" type="primary">nadE</name>
    <name type="ordered locus">Arad_7634</name>
</gene>
<comment type="function">
    <text evidence="1">Catalyzes the ATP-dependent amidation of deamido-NAD to form NAD. Uses ammonia as a nitrogen source.</text>
</comment>
<comment type="catalytic activity">
    <reaction evidence="1">
        <text>deamido-NAD(+) + NH4(+) + ATP = AMP + diphosphate + NAD(+) + H(+)</text>
        <dbReference type="Rhea" id="RHEA:21188"/>
        <dbReference type="ChEBI" id="CHEBI:15378"/>
        <dbReference type="ChEBI" id="CHEBI:28938"/>
        <dbReference type="ChEBI" id="CHEBI:30616"/>
        <dbReference type="ChEBI" id="CHEBI:33019"/>
        <dbReference type="ChEBI" id="CHEBI:57540"/>
        <dbReference type="ChEBI" id="CHEBI:58437"/>
        <dbReference type="ChEBI" id="CHEBI:456215"/>
        <dbReference type="EC" id="6.3.1.5"/>
    </reaction>
</comment>
<comment type="pathway">
    <text evidence="1">Cofactor biosynthesis; NAD(+) biosynthesis; NAD(+) from deamido-NAD(+) (ammonia route): step 1/1.</text>
</comment>
<comment type="subunit">
    <text evidence="1">Homodimer.</text>
</comment>
<comment type="similarity">
    <text evidence="1">Belongs to the NAD synthetase family.</text>
</comment>
<feature type="chain" id="PRO_1000191492" description="NH(3)-dependent NAD(+) synthetase">
    <location>
        <begin position="1"/>
        <end position="332"/>
    </location>
</feature>
<feature type="binding site" evidence="1">
    <location>
        <begin position="48"/>
        <end position="55"/>
    </location>
    <ligand>
        <name>ATP</name>
        <dbReference type="ChEBI" id="CHEBI:30616"/>
    </ligand>
</feature>
<feature type="binding site" evidence="1">
    <location>
        <position position="54"/>
    </location>
    <ligand>
        <name>Mg(2+)</name>
        <dbReference type="ChEBI" id="CHEBI:18420"/>
    </ligand>
</feature>
<feature type="binding site" evidence="1">
    <location>
        <position position="184"/>
    </location>
    <ligand>
        <name>deamido-NAD(+)</name>
        <dbReference type="ChEBI" id="CHEBI:58437"/>
    </ligand>
</feature>
<feature type="binding site" evidence="1">
    <location>
        <position position="204"/>
    </location>
    <ligand>
        <name>ATP</name>
        <dbReference type="ChEBI" id="CHEBI:30616"/>
    </ligand>
</feature>
<feature type="binding site" evidence="1">
    <location>
        <position position="209"/>
    </location>
    <ligand>
        <name>Mg(2+)</name>
        <dbReference type="ChEBI" id="CHEBI:18420"/>
    </ligand>
</feature>
<feature type="binding site" evidence="1">
    <location>
        <position position="217"/>
    </location>
    <ligand>
        <name>deamido-NAD(+)</name>
        <dbReference type="ChEBI" id="CHEBI:58437"/>
    </ligand>
</feature>
<feature type="binding site" evidence="1">
    <location>
        <position position="224"/>
    </location>
    <ligand>
        <name>deamido-NAD(+)</name>
        <dbReference type="ChEBI" id="CHEBI:58437"/>
    </ligand>
</feature>
<feature type="binding site" evidence="1">
    <location>
        <position position="233"/>
    </location>
    <ligand>
        <name>ATP</name>
        <dbReference type="ChEBI" id="CHEBI:30616"/>
    </ligand>
</feature>
<feature type="binding site" evidence="1">
    <location>
        <position position="255"/>
    </location>
    <ligand>
        <name>ATP</name>
        <dbReference type="ChEBI" id="CHEBI:30616"/>
    </ligand>
</feature>
<protein>
    <recommendedName>
        <fullName evidence="1">NH(3)-dependent NAD(+) synthetase</fullName>
        <ecNumber evidence="1">6.3.1.5</ecNumber>
    </recommendedName>
</protein>
<organism>
    <name type="scientific">Rhizobium rhizogenes (strain K84 / ATCC BAA-868)</name>
    <name type="common">Agrobacterium radiobacter</name>
    <dbReference type="NCBI Taxonomy" id="311403"/>
    <lineage>
        <taxon>Bacteria</taxon>
        <taxon>Pseudomonadati</taxon>
        <taxon>Pseudomonadota</taxon>
        <taxon>Alphaproteobacteria</taxon>
        <taxon>Hyphomicrobiales</taxon>
        <taxon>Rhizobiaceae</taxon>
        <taxon>Rhizobium/Agrobacterium group</taxon>
        <taxon>Rhizobium</taxon>
    </lineage>
</organism>
<proteinExistence type="inferred from homology"/>
<name>NADE_RHIR8</name>
<dbReference type="EC" id="6.3.1.5" evidence="1"/>
<dbReference type="EMBL" id="CP000629">
    <property type="protein sequence ID" value="ACM29092.1"/>
    <property type="molecule type" value="Genomic_DNA"/>
</dbReference>
<dbReference type="RefSeq" id="WP_012649426.1">
    <property type="nucleotide sequence ID" value="NC_011983.1"/>
</dbReference>
<dbReference type="SMR" id="B9JNG1"/>
<dbReference type="STRING" id="311403.Arad_7634"/>
<dbReference type="GeneID" id="86851298"/>
<dbReference type="KEGG" id="ara:Arad_7634"/>
<dbReference type="eggNOG" id="COG0171">
    <property type="taxonomic scope" value="Bacteria"/>
</dbReference>
<dbReference type="HOGENOM" id="CLU_059327_0_0_5"/>
<dbReference type="UniPathway" id="UPA00253">
    <property type="reaction ID" value="UER00333"/>
</dbReference>
<dbReference type="Proteomes" id="UP000001600">
    <property type="component" value="Chromosome 2"/>
</dbReference>
<dbReference type="GO" id="GO:0005737">
    <property type="term" value="C:cytoplasm"/>
    <property type="evidence" value="ECO:0007669"/>
    <property type="project" value="InterPro"/>
</dbReference>
<dbReference type="GO" id="GO:0005524">
    <property type="term" value="F:ATP binding"/>
    <property type="evidence" value="ECO:0007669"/>
    <property type="project" value="UniProtKB-UniRule"/>
</dbReference>
<dbReference type="GO" id="GO:0004359">
    <property type="term" value="F:glutaminase activity"/>
    <property type="evidence" value="ECO:0007669"/>
    <property type="project" value="InterPro"/>
</dbReference>
<dbReference type="GO" id="GO:0046872">
    <property type="term" value="F:metal ion binding"/>
    <property type="evidence" value="ECO:0007669"/>
    <property type="project" value="UniProtKB-KW"/>
</dbReference>
<dbReference type="GO" id="GO:0003952">
    <property type="term" value="F:NAD+ synthase (glutamine-hydrolyzing) activity"/>
    <property type="evidence" value="ECO:0007669"/>
    <property type="project" value="InterPro"/>
</dbReference>
<dbReference type="GO" id="GO:0008795">
    <property type="term" value="F:NAD+ synthase activity"/>
    <property type="evidence" value="ECO:0007669"/>
    <property type="project" value="UniProtKB-UniRule"/>
</dbReference>
<dbReference type="GO" id="GO:0009435">
    <property type="term" value="P:NAD biosynthetic process"/>
    <property type="evidence" value="ECO:0007669"/>
    <property type="project" value="UniProtKB-UniRule"/>
</dbReference>
<dbReference type="CDD" id="cd00553">
    <property type="entry name" value="NAD_synthase"/>
    <property type="match status" value="1"/>
</dbReference>
<dbReference type="Gene3D" id="3.40.50.620">
    <property type="entry name" value="HUPs"/>
    <property type="match status" value="1"/>
</dbReference>
<dbReference type="HAMAP" id="MF_00193">
    <property type="entry name" value="NadE_ammonia_dep"/>
    <property type="match status" value="1"/>
</dbReference>
<dbReference type="InterPro" id="IPR022310">
    <property type="entry name" value="NAD/GMP_synthase"/>
</dbReference>
<dbReference type="InterPro" id="IPR003694">
    <property type="entry name" value="NAD_synthase"/>
</dbReference>
<dbReference type="InterPro" id="IPR022926">
    <property type="entry name" value="NH(3)-dep_NAD(+)_synth"/>
</dbReference>
<dbReference type="InterPro" id="IPR014729">
    <property type="entry name" value="Rossmann-like_a/b/a_fold"/>
</dbReference>
<dbReference type="NCBIfam" id="TIGR00552">
    <property type="entry name" value="nadE"/>
    <property type="match status" value="1"/>
</dbReference>
<dbReference type="NCBIfam" id="NF002048">
    <property type="entry name" value="PRK00876.1"/>
    <property type="match status" value="1"/>
</dbReference>
<dbReference type="PANTHER" id="PTHR23090:SF9">
    <property type="entry name" value="GLUTAMINE-DEPENDENT NAD(+) SYNTHETASE"/>
    <property type="match status" value="1"/>
</dbReference>
<dbReference type="PANTHER" id="PTHR23090">
    <property type="entry name" value="NH 3 /GLUTAMINE-DEPENDENT NAD + SYNTHETASE"/>
    <property type="match status" value="1"/>
</dbReference>
<dbReference type="Pfam" id="PF02540">
    <property type="entry name" value="NAD_synthase"/>
    <property type="match status" value="2"/>
</dbReference>
<dbReference type="SUPFAM" id="SSF52402">
    <property type="entry name" value="Adenine nucleotide alpha hydrolases-like"/>
    <property type="match status" value="1"/>
</dbReference>
<accession>B9JNG1</accession>
<keyword id="KW-0067">ATP-binding</keyword>
<keyword id="KW-0436">Ligase</keyword>
<keyword id="KW-0460">Magnesium</keyword>
<keyword id="KW-0479">Metal-binding</keyword>
<keyword id="KW-0520">NAD</keyword>
<keyword id="KW-0547">Nucleotide-binding</keyword>